<accession>P0DI37</accession>
<accession>A0A0Q3I2J9</accession>
<gene>
    <name type="ordered locus">Bradi3g12975</name>
    <name type="ORF">LOC100836776</name>
</gene>
<sequence length="227" mass="24188">MSSTSEATVIHMDGAAGKTPATAVPPPPPPAPTAPVQQQRKAGGVPFLLRSGAEGFRRCMALLDLLLRVAAMGPTLAAAISTGTSDETLSVFTHYFQFRARFDDFSAFTFFMVANAVAAGYLLMSLPFSAFGVIRPKATSVRLLLLICDTIMVVLVTAAASAAAAIVYVAHEGNRRANWVPICMQFHGFCKRTSGAVVASFLAVLIFILLVFLGACAIRRRHTTTKH</sequence>
<proteinExistence type="inferred from homology"/>
<evidence type="ECO:0000250" key="1"/>
<evidence type="ECO:0000255" key="2"/>
<evidence type="ECO:0000256" key="3">
    <source>
        <dbReference type="SAM" id="MobiDB-lite"/>
    </source>
</evidence>
<evidence type="ECO:0000305" key="4"/>
<name>CASP2_BRADI</name>
<feature type="chain" id="PRO_0000417763" description="Casparian strip membrane protein 2">
    <location>
        <begin position="1"/>
        <end position="227"/>
    </location>
</feature>
<feature type="topological domain" description="Cytoplasmic" evidence="2">
    <location>
        <begin position="1"/>
        <end position="59"/>
    </location>
</feature>
<feature type="transmembrane region" description="Helical" evidence="2">
    <location>
        <begin position="60"/>
        <end position="80"/>
    </location>
</feature>
<feature type="topological domain" description="Extracellular" evidence="2">
    <location>
        <begin position="81"/>
        <end position="107"/>
    </location>
</feature>
<feature type="transmembrane region" description="Helical" evidence="2">
    <location>
        <begin position="108"/>
        <end position="128"/>
    </location>
</feature>
<feature type="topological domain" description="Cytoplasmic" evidence="2">
    <location>
        <begin position="129"/>
        <end position="149"/>
    </location>
</feature>
<feature type="transmembrane region" description="Helical" evidence="2">
    <location>
        <begin position="150"/>
        <end position="170"/>
    </location>
</feature>
<feature type="topological domain" description="Extracellular" evidence="2">
    <location>
        <begin position="171"/>
        <end position="197"/>
    </location>
</feature>
<feature type="transmembrane region" description="Helical" evidence="2">
    <location>
        <begin position="198"/>
        <end position="218"/>
    </location>
</feature>
<feature type="topological domain" description="Cytoplasmic" evidence="2">
    <location>
        <begin position="219"/>
        <end position="227"/>
    </location>
</feature>
<feature type="region of interest" description="Disordered" evidence="3">
    <location>
        <begin position="17"/>
        <end position="37"/>
    </location>
</feature>
<feature type="compositionally biased region" description="Pro residues" evidence="3">
    <location>
        <begin position="23"/>
        <end position="33"/>
    </location>
</feature>
<keyword id="KW-1003">Cell membrane</keyword>
<keyword id="KW-0961">Cell wall biogenesis/degradation</keyword>
<keyword id="KW-0472">Membrane</keyword>
<keyword id="KW-1185">Reference proteome</keyword>
<keyword id="KW-0812">Transmembrane</keyword>
<keyword id="KW-1133">Transmembrane helix</keyword>
<reference key="1">
    <citation type="journal article" date="2010" name="Nature">
        <title>Genome sequencing and analysis of the model grass Brachypodium distachyon.</title>
        <authorList>
            <consortium name="International Brachypodium Initiative"/>
        </authorList>
    </citation>
    <scope>NUCLEOTIDE SEQUENCE [LARGE SCALE GENOMIC DNA]</scope>
    <source>
        <strain>cv. Bd21</strain>
    </source>
</reference>
<reference key="2">
    <citation type="journal article" date="2014" name="Plant Physiol.">
        <title>Functional and evolutionary analysis of the CASPARIAN STRIP MEMBRANE DOMAIN PROTEIN family.</title>
        <authorList>
            <person name="Roppolo D."/>
            <person name="Boeckmann B."/>
            <person name="Pfister A."/>
            <person name="Boutet E."/>
            <person name="Rubio M.C."/>
            <person name="Denervaud-Tendon V."/>
            <person name="Vermeer J.E."/>
            <person name="Gheyselinck J."/>
            <person name="Xenarios I."/>
            <person name="Geldner N."/>
        </authorList>
    </citation>
    <scope>GENE FAMILY</scope>
    <scope>NOMENCLATURE</scope>
</reference>
<comment type="function">
    <text evidence="1">Regulates membrane-cell wall junctions and localized cell wall deposition. Required for establishment of the Casparian strip membrane domain (CSD) and the subsequent formation of Casparian strips, a cell wall modification of the root endodermis that determines an apoplastic barrier between the intraorganismal apoplasm and the extraorganismal apoplasm and prevents lateral diffusion (By similarity).</text>
</comment>
<comment type="subunit">
    <text evidence="1">Homodimer and heterodimers.</text>
</comment>
<comment type="subcellular location">
    <subcellularLocation>
        <location evidence="1">Cell membrane</location>
        <topology evidence="1">Multi-pass membrane protein</topology>
    </subcellularLocation>
    <text evidence="1">Very restricted localization following a belt shape within the plasma membrane which coincides with the position of the Casparian strip membrane domain in the root endodermis.</text>
</comment>
<comment type="similarity">
    <text evidence="4">Belongs to the Casparian strip membrane proteins (CASP) family.</text>
</comment>
<protein>
    <recommendedName>
        <fullName>Casparian strip membrane protein 2</fullName>
        <shortName>BdCASP2</shortName>
    </recommendedName>
</protein>
<organism>
    <name type="scientific">Brachypodium distachyon</name>
    <name type="common">Purple false brome</name>
    <name type="synonym">Trachynia distachya</name>
    <dbReference type="NCBI Taxonomy" id="15368"/>
    <lineage>
        <taxon>Eukaryota</taxon>
        <taxon>Viridiplantae</taxon>
        <taxon>Streptophyta</taxon>
        <taxon>Embryophyta</taxon>
        <taxon>Tracheophyta</taxon>
        <taxon>Spermatophyta</taxon>
        <taxon>Magnoliopsida</taxon>
        <taxon>Liliopsida</taxon>
        <taxon>Poales</taxon>
        <taxon>Poaceae</taxon>
        <taxon>BOP clade</taxon>
        <taxon>Pooideae</taxon>
        <taxon>Stipodae</taxon>
        <taxon>Brachypodieae</taxon>
        <taxon>Brachypodium</taxon>
    </lineage>
</organism>
<dbReference type="EMBL" id="CM000882">
    <property type="protein sequence ID" value="KQJ94755.1"/>
    <property type="molecule type" value="Genomic_DNA"/>
</dbReference>
<dbReference type="RefSeq" id="XP_003571287.1">
    <property type="nucleotide sequence ID" value="XM_003571239.3"/>
</dbReference>
<dbReference type="SMR" id="P0DI37"/>
<dbReference type="FunCoup" id="P0DI37">
    <property type="interactions" value="1"/>
</dbReference>
<dbReference type="STRING" id="15368.P0DI37"/>
<dbReference type="EnsemblPlants" id="KQJ94755">
    <property type="protein sequence ID" value="KQJ94755"/>
    <property type="gene ID" value="BRADI_3g12975v3"/>
</dbReference>
<dbReference type="GeneID" id="100836776"/>
<dbReference type="Gramene" id="KQJ94755">
    <property type="protein sequence ID" value="KQJ94755"/>
    <property type="gene ID" value="BRADI_3g12975v3"/>
</dbReference>
<dbReference type="KEGG" id="bdi:100836776"/>
<dbReference type="eggNOG" id="ENOG502QZV7">
    <property type="taxonomic scope" value="Eukaryota"/>
</dbReference>
<dbReference type="HOGENOM" id="CLU_066104_3_1_1"/>
<dbReference type="InParanoid" id="P0DI37"/>
<dbReference type="OMA" id="FHAQYND"/>
<dbReference type="OrthoDB" id="753675at2759"/>
<dbReference type="Proteomes" id="UP000008810">
    <property type="component" value="Chromosome 3"/>
</dbReference>
<dbReference type="GO" id="GO:0048226">
    <property type="term" value="C:Casparian strip"/>
    <property type="evidence" value="ECO:0000318"/>
    <property type="project" value="GO_Central"/>
</dbReference>
<dbReference type="GO" id="GO:0005886">
    <property type="term" value="C:plasma membrane"/>
    <property type="evidence" value="ECO:0000318"/>
    <property type="project" value="GO_Central"/>
</dbReference>
<dbReference type="GO" id="GO:0042545">
    <property type="term" value="P:cell wall modification"/>
    <property type="evidence" value="ECO:0000318"/>
    <property type="project" value="GO_Central"/>
</dbReference>
<dbReference type="GO" id="GO:0007043">
    <property type="term" value="P:cell-cell junction assembly"/>
    <property type="evidence" value="ECO:0000318"/>
    <property type="project" value="GO_Central"/>
</dbReference>
<dbReference type="InterPro" id="IPR006459">
    <property type="entry name" value="CASP/CASPL"/>
</dbReference>
<dbReference type="InterPro" id="IPR006702">
    <property type="entry name" value="CASP_dom"/>
</dbReference>
<dbReference type="InterPro" id="IPR044173">
    <property type="entry name" value="CASPL"/>
</dbReference>
<dbReference type="NCBIfam" id="TIGR01569">
    <property type="entry name" value="A_tha_TIGR01569"/>
    <property type="match status" value="1"/>
</dbReference>
<dbReference type="PANTHER" id="PTHR36488:SF11">
    <property type="entry name" value="CASP-LIKE PROTEIN"/>
    <property type="match status" value="1"/>
</dbReference>
<dbReference type="PANTHER" id="PTHR36488">
    <property type="entry name" value="CASP-LIKE PROTEIN 1U1"/>
    <property type="match status" value="1"/>
</dbReference>
<dbReference type="Pfam" id="PF04535">
    <property type="entry name" value="CASP_dom"/>
    <property type="match status" value="1"/>
</dbReference>